<protein>
    <recommendedName>
        <fullName>Ferric uptake regulation protein homolog</fullName>
    </recommendedName>
</protein>
<gene>
    <name type="ordered locus">AF_2232</name>
</gene>
<comment type="similarity">
    <text evidence="1">Belongs to the Fur family.</text>
</comment>
<proteinExistence type="inferred from homology"/>
<organism>
    <name type="scientific">Archaeoglobus fulgidus (strain ATCC 49558 / DSM 4304 / JCM 9628 / NBRC 100126 / VC-16)</name>
    <dbReference type="NCBI Taxonomy" id="224325"/>
    <lineage>
        <taxon>Archaea</taxon>
        <taxon>Methanobacteriati</taxon>
        <taxon>Methanobacteriota</taxon>
        <taxon>Archaeoglobi</taxon>
        <taxon>Archaeoglobales</taxon>
        <taxon>Archaeoglobaceae</taxon>
        <taxon>Archaeoglobus</taxon>
    </lineage>
</organism>
<name>FURH_ARCFU</name>
<feature type="chain" id="PRO_0000095596" description="Ferric uptake regulation protein homolog">
    <location>
        <begin position="1"/>
        <end position="128"/>
    </location>
</feature>
<evidence type="ECO:0000305" key="1"/>
<dbReference type="EMBL" id="AE000782">
    <property type="protein sequence ID" value="AAB89023.1"/>
    <property type="molecule type" value="Genomic_DNA"/>
</dbReference>
<dbReference type="PIR" id="H69528">
    <property type="entry name" value="H69528"/>
</dbReference>
<dbReference type="RefSeq" id="WP_010879721.1">
    <property type="nucleotide sequence ID" value="NC_000917.1"/>
</dbReference>
<dbReference type="SMR" id="O28051"/>
<dbReference type="STRING" id="224325.AF_2232"/>
<dbReference type="PaxDb" id="224325-AF_2232"/>
<dbReference type="EnsemblBacteria" id="AAB89023">
    <property type="protein sequence ID" value="AAB89023"/>
    <property type="gene ID" value="AF_2232"/>
</dbReference>
<dbReference type="KEGG" id="afu:AF_2232"/>
<dbReference type="eggNOG" id="arCOG01868">
    <property type="taxonomic scope" value="Archaea"/>
</dbReference>
<dbReference type="HOGENOM" id="CLU_096072_4_4_2"/>
<dbReference type="OrthoDB" id="21318at2157"/>
<dbReference type="PhylomeDB" id="O28051"/>
<dbReference type="Proteomes" id="UP000002199">
    <property type="component" value="Chromosome"/>
</dbReference>
<dbReference type="GO" id="GO:0003700">
    <property type="term" value="F:DNA-binding transcription factor activity"/>
    <property type="evidence" value="ECO:0007669"/>
    <property type="project" value="InterPro"/>
</dbReference>
<dbReference type="GO" id="GO:0000976">
    <property type="term" value="F:transcription cis-regulatory region binding"/>
    <property type="evidence" value="ECO:0007669"/>
    <property type="project" value="TreeGrafter"/>
</dbReference>
<dbReference type="GO" id="GO:0008270">
    <property type="term" value="F:zinc ion binding"/>
    <property type="evidence" value="ECO:0007669"/>
    <property type="project" value="TreeGrafter"/>
</dbReference>
<dbReference type="GO" id="GO:0045892">
    <property type="term" value="P:negative regulation of DNA-templated transcription"/>
    <property type="evidence" value="ECO:0007669"/>
    <property type="project" value="TreeGrafter"/>
</dbReference>
<dbReference type="GO" id="GO:1900376">
    <property type="term" value="P:regulation of secondary metabolite biosynthetic process"/>
    <property type="evidence" value="ECO:0007669"/>
    <property type="project" value="TreeGrafter"/>
</dbReference>
<dbReference type="Gene3D" id="1.10.10.10">
    <property type="entry name" value="Winged helix-like DNA-binding domain superfamily/Winged helix DNA-binding domain"/>
    <property type="match status" value="1"/>
</dbReference>
<dbReference type="InterPro" id="IPR002481">
    <property type="entry name" value="FUR"/>
</dbReference>
<dbReference type="InterPro" id="IPR036388">
    <property type="entry name" value="WH-like_DNA-bd_sf"/>
</dbReference>
<dbReference type="InterPro" id="IPR036390">
    <property type="entry name" value="WH_DNA-bd_sf"/>
</dbReference>
<dbReference type="PANTHER" id="PTHR33202:SF7">
    <property type="entry name" value="FERRIC UPTAKE REGULATION PROTEIN"/>
    <property type="match status" value="1"/>
</dbReference>
<dbReference type="PANTHER" id="PTHR33202">
    <property type="entry name" value="ZINC UPTAKE REGULATION PROTEIN"/>
    <property type="match status" value="1"/>
</dbReference>
<dbReference type="Pfam" id="PF01475">
    <property type="entry name" value="FUR"/>
    <property type="match status" value="1"/>
</dbReference>
<dbReference type="SUPFAM" id="SSF46785">
    <property type="entry name" value="Winged helix' DNA-binding domain"/>
    <property type="match status" value="1"/>
</dbReference>
<keyword id="KW-0238">DNA-binding</keyword>
<keyword id="KW-1185">Reference proteome</keyword>
<sequence>MWKERAMEEMKKAGLRLTPQRLKLIEVIEKIGGRHPTLKEVYEEVVKEFPTMSFSTLYSNLLIFRGLGLLDFFTLEGETRVEVNCEPHFNVIEREEIRDFVDEELIGEIERRLGRNVKVVNVFMEDRD</sequence>
<reference key="1">
    <citation type="journal article" date="1997" name="Nature">
        <title>The complete genome sequence of the hyperthermophilic, sulphate-reducing archaeon Archaeoglobus fulgidus.</title>
        <authorList>
            <person name="Klenk H.-P."/>
            <person name="Clayton R.A."/>
            <person name="Tomb J.-F."/>
            <person name="White O."/>
            <person name="Nelson K.E."/>
            <person name="Ketchum K.A."/>
            <person name="Dodson R.J."/>
            <person name="Gwinn M.L."/>
            <person name="Hickey E.K."/>
            <person name="Peterson J.D."/>
            <person name="Richardson D.L."/>
            <person name="Kerlavage A.R."/>
            <person name="Graham D.E."/>
            <person name="Kyrpides N.C."/>
            <person name="Fleischmann R.D."/>
            <person name="Quackenbush J."/>
            <person name="Lee N.H."/>
            <person name="Sutton G.G."/>
            <person name="Gill S.R."/>
            <person name="Kirkness E.F."/>
            <person name="Dougherty B.A."/>
            <person name="McKenney K."/>
            <person name="Adams M.D."/>
            <person name="Loftus B.J."/>
            <person name="Peterson S.N."/>
            <person name="Reich C.I."/>
            <person name="McNeil L.K."/>
            <person name="Badger J.H."/>
            <person name="Glodek A."/>
            <person name="Zhou L."/>
            <person name="Overbeek R."/>
            <person name="Gocayne J.D."/>
            <person name="Weidman J.F."/>
            <person name="McDonald L.A."/>
            <person name="Utterback T.R."/>
            <person name="Cotton M.D."/>
            <person name="Spriggs T."/>
            <person name="Artiach P."/>
            <person name="Kaine B.P."/>
            <person name="Sykes S.M."/>
            <person name="Sadow P.W."/>
            <person name="D'Andrea K.P."/>
            <person name="Bowman C."/>
            <person name="Fujii C."/>
            <person name="Garland S.A."/>
            <person name="Mason T.M."/>
            <person name="Olsen G.J."/>
            <person name="Fraser C.M."/>
            <person name="Smith H.O."/>
            <person name="Woese C.R."/>
            <person name="Venter J.C."/>
        </authorList>
    </citation>
    <scope>NUCLEOTIDE SEQUENCE [LARGE SCALE GENOMIC DNA]</scope>
    <source>
        <strain>ATCC 49558 / DSM 4304 / JCM 9628 / NBRC 100126 / VC-16</strain>
    </source>
</reference>
<accession>O28051</accession>